<reference key="1">
    <citation type="journal article" date="1986" name="FEBS Lett.">
        <title>Isolation and structure of the Streptococcus faecalis sex pheromone, cAM373.</title>
        <authorList>
            <person name="Mori M."/>
            <person name="Tanaka H."/>
            <person name="Sakagami Y."/>
            <person name="Isogai A."/>
            <person name="Fujino M."/>
            <person name="Kitada C."/>
            <person name="White B.A."/>
            <person name="An F.Y."/>
            <person name="Clewell D.B."/>
            <person name="Suzuki A."/>
        </authorList>
    </citation>
    <scope>PROTEIN SEQUENCE</scope>
</reference>
<keyword id="KW-0903">Direct protein sequencing</keyword>
<keyword id="KW-0588">Pheromone</keyword>
<proteinExistence type="evidence at protein level"/>
<feature type="peptide" id="PRO_0000044120" description="Sex pheromone cAM373">
    <location>
        <begin position="1"/>
        <end position="7"/>
    </location>
</feature>
<dbReference type="PIR" id="A25269">
    <property type="entry name" value="A25269"/>
</dbReference>
<dbReference type="GO" id="GO:0005186">
    <property type="term" value="F:pheromone activity"/>
    <property type="evidence" value="ECO:0007669"/>
    <property type="project" value="UniProtKB-KW"/>
</dbReference>
<name>CIA_ENTFL</name>
<accession>P11932</accession>
<sequence length="7" mass="734">AIFILAS</sequence>
<protein>
    <recommendedName>
        <fullName>Sex pheromone cAM373</fullName>
    </recommendedName>
    <alternativeName>
        <fullName>Clumping-inducing agent</fullName>
        <shortName>CIA</shortName>
    </alternativeName>
</protein>
<organism>
    <name type="scientific">Enterococcus faecalis</name>
    <name type="common">Streptococcus faecalis</name>
    <dbReference type="NCBI Taxonomy" id="1351"/>
    <lineage>
        <taxon>Bacteria</taxon>
        <taxon>Bacillati</taxon>
        <taxon>Bacillota</taxon>
        <taxon>Bacilli</taxon>
        <taxon>Lactobacillales</taxon>
        <taxon>Enterococcaceae</taxon>
        <taxon>Enterococcus</taxon>
    </lineage>
</organism>
<comment type="function">
    <text>cAM373 induces mating response of donor cells harboring pAM373.</text>
</comment>
<comment type="miscellaneous">
    <text>The N-terminus is possibly responsible for specificity of pheromones to plasmids.</text>
</comment>